<proteinExistence type="inferred from homology"/>
<accession>B2JHG3</accession>
<sequence length="389" mass="42779">MLLALAQWLQNDVGFLRVFSYLTFRAVAATITALLIGLVCGPWVIRKLTQMKVGQAVRKDGPQTHLVKSGTPTMGGVLILIGIAVSTLLWADLTNRFIWIVMLVTFGFGVIGWVDDYRKVVYKDPRGMSSREKYFWQSLIGLFAAVYLAFSVSEASNVRVFDLFMAWVRSGLSMGLPARADLLLPFLKSMTYPLGVWGFIALTYLVIVGSSNAVNLTDGLDGLVIMPVVLVGSSLGVFAYVMGSAVYSKYLLFPHIAGAGEMLIFCSAMGGAGLAFLWFNTHPAQVFMGDVGALALGGALGTIAVIVRQEIVLFIMGGIFVAETVSVMLQVTWFKFTKARFGEGRRIFKMAPLHHHFELSGWKETQVVVRFWIITLMLCLFGLSTLKLR</sequence>
<keyword id="KW-0131">Cell cycle</keyword>
<keyword id="KW-0132">Cell division</keyword>
<keyword id="KW-0997">Cell inner membrane</keyword>
<keyword id="KW-1003">Cell membrane</keyword>
<keyword id="KW-0133">Cell shape</keyword>
<keyword id="KW-0961">Cell wall biogenesis/degradation</keyword>
<keyword id="KW-0460">Magnesium</keyword>
<keyword id="KW-0472">Membrane</keyword>
<keyword id="KW-0479">Metal-binding</keyword>
<keyword id="KW-0573">Peptidoglycan synthesis</keyword>
<keyword id="KW-1185">Reference proteome</keyword>
<keyword id="KW-0808">Transferase</keyword>
<keyword id="KW-0812">Transmembrane</keyword>
<keyword id="KW-1133">Transmembrane helix</keyword>
<evidence type="ECO:0000255" key="1">
    <source>
        <dbReference type="HAMAP-Rule" id="MF_00038"/>
    </source>
</evidence>
<protein>
    <recommendedName>
        <fullName evidence="1">Phospho-N-acetylmuramoyl-pentapeptide-transferase</fullName>
        <ecNumber evidence="1">2.7.8.13</ecNumber>
    </recommendedName>
    <alternativeName>
        <fullName evidence="1">UDP-MurNAc-pentapeptide phosphotransferase</fullName>
    </alternativeName>
</protein>
<organism>
    <name type="scientific">Paraburkholderia phymatum (strain DSM 17167 / CIP 108236 / LMG 21445 / STM815)</name>
    <name type="common">Burkholderia phymatum</name>
    <dbReference type="NCBI Taxonomy" id="391038"/>
    <lineage>
        <taxon>Bacteria</taxon>
        <taxon>Pseudomonadati</taxon>
        <taxon>Pseudomonadota</taxon>
        <taxon>Betaproteobacteria</taxon>
        <taxon>Burkholderiales</taxon>
        <taxon>Burkholderiaceae</taxon>
        <taxon>Paraburkholderia</taxon>
    </lineage>
</organism>
<feature type="chain" id="PRO_1000090603" description="Phospho-N-acetylmuramoyl-pentapeptide-transferase">
    <location>
        <begin position="1"/>
        <end position="389"/>
    </location>
</feature>
<feature type="transmembrane region" description="Helical" evidence="1">
    <location>
        <begin position="25"/>
        <end position="45"/>
    </location>
</feature>
<feature type="transmembrane region" description="Helical" evidence="1">
    <location>
        <begin position="73"/>
        <end position="93"/>
    </location>
</feature>
<feature type="transmembrane region" description="Helical" evidence="1">
    <location>
        <begin position="97"/>
        <end position="117"/>
    </location>
</feature>
<feature type="transmembrane region" description="Helical" evidence="1">
    <location>
        <begin position="135"/>
        <end position="155"/>
    </location>
</feature>
<feature type="transmembrane region" description="Helical" evidence="1">
    <location>
        <begin position="189"/>
        <end position="209"/>
    </location>
</feature>
<feature type="transmembrane region" description="Helical" evidence="1">
    <location>
        <begin position="222"/>
        <end position="242"/>
    </location>
</feature>
<feature type="transmembrane region" description="Helical" evidence="1">
    <location>
        <begin position="259"/>
        <end position="279"/>
    </location>
</feature>
<feature type="transmembrane region" description="Helical" evidence="1">
    <location>
        <begin position="286"/>
        <end position="306"/>
    </location>
</feature>
<feature type="transmembrane region" description="Helical" evidence="1">
    <location>
        <begin position="311"/>
        <end position="331"/>
    </location>
</feature>
<feature type="transmembrane region" description="Helical" evidence="1">
    <location>
        <begin position="366"/>
        <end position="386"/>
    </location>
</feature>
<gene>
    <name evidence="1" type="primary">mraY</name>
    <name type="ordered locus">Bphy_2676</name>
</gene>
<reference key="1">
    <citation type="journal article" date="2014" name="Stand. Genomic Sci.">
        <title>Complete genome sequence of Burkholderia phymatum STM815(T), a broad host range and efficient nitrogen-fixing symbiont of Mimosa species.</title>
        <authorList>
            <person name="Moulin L."/>
            <person name="Klonowska A."/>
            <person name="Caroline B."/>
            <person name="Booth K."/>
            <person name="Vriezen J.A."/>
            <person name="Melkonian R."/>
            <person name="James E.K."/>
            <person name="Young J.P."/>
            <person name="Bena G."/>
            <person name="Hauser L."/>
            <person name="Land M."/>
            <person name="Kyrpides N."/>
            <person name="Bruce D."/>
            <person name="Chain P."/>
            <person name="Copeland A."/>
            <person name="Pitluck S."/>
            <person name="Woyke T."/>
            <person name="Lizotte-Waniewski M."/>
            <person name="Bristow J."/>
            <person name="Riley M."/>
        </authorList>
    </citation>
    <scope>NUCLEOTIDE SEQUENCE [LARGE SCALE GENOMIC DNA]</scope>
    <source>
        <strain>DSM 17167 / CIP 108236 / LMG 21445 / STM815</strain>
    </source>
</reference>
<comment type="function">
    <text evidence="1">Catalyzes the initial step of the lipid cycle reactions in the biosynthesis of the cell wall peptidoglycan: transfers peptidoglycan precursor phospho-MurNAc-pentapeptide from UDP-MurNAc-pentapeptide onto the lipid carrier undecaprenyl phosphate, yielding undecaprenyl-pyrophosphoryl-MurNAc-pentapeptide, known as lipid I.</text>
</comment>
<comment type="catalytic activity">
    <reaction evidence="1">
        <text>UDP-N-acetyl-alpha-D-muramoyl-L-alanyl-gamma-D-glutamyl-meso-2,6-diaminopimeloyl-D-alanyl-D-alanine + di-trans,octa-cis-undecaprenyl phosphate = di-trans,octa-cis-undecaprenyl diphospho-N-acetyl-alpha-D-muramoyl-L-alanyl-D-glutamyl-meso-2,6-diaminopimeloyl-D-alanyl-D-alanine + UMP</text>
        <dbReference type="Rhea" id="RHEA:28386"/>
        <dbReference type="ChEBI" id="CHEBI:57865"/>
        <dbReference type="ChEBI" id="CHEBI:60392"/>
        <dbReference type="ChEBI" id="CHEBI:61386"/>
        <dbReference type="ChEBI" id="CHEBI:61387"/>
        <dbReference type="EC" id="2.7.8.13"/>
    </reaction>
</comment>
<comment type="cofactor">
    <cofactor evidence="1">
        <name>Mg(2+)</name>
        <dbReference type="ChEBI" id="CHEBI:18420"/>
    </cofactor>
</comment>
<comment type="pathway">
    <text evidence="1">Cell wall biogenesis; peptidoglycan biosynthesis.</text>
</comment>
<comment type="subcellular location">
    <subcellularLocation>
        <location evidence="1">Cell inner membrane</location>
        <topology evidence="1">Multi-pass membrane protein</topology>
    </subcellularLocation>
</comment>
<comment type="similarity">
    <text evidence="1">Belongs to the glycosyltransferase 4 family. MraY subfamily.</text>
</comment>
<name>MRAY_PARP8</name>
<dbReference type="EC" id="2.7.8.13" evidence="1"/>
<dbReference type="EMBL" id="CP001043">
    <property type="protein sequence ID" value="ACC71848.1"/>
    <property type="molecule type" value="Genomic_DNA"/>
</dbReference>
<dbReference type="RefSeq" id="WP_012402047.1">
    <property type="nucleotide sequence ID" value="NZ_CADFGH010000021.1"/>
</dbReference>
<dbReference type="SMR" id="B2JHG3"/>
<dbReference type="STRING" id="391038.Bphy_2676"/>
<dbReference type="KEGG" id="bph:Bphy_2676"/>
<dbReference type="eggNOG" id="COG0472">
    <property type="taxonomic scope" value="Bacteria"/>
</dbReference>
<dbReference type="HOGENOM" id="CLU_023982_0_0_4"/>
<dbReference type="OrthoDB" id="9805475at2"/>
<dbReference type="UniPathway" id="UPA00219"/>
<dbReference type="Proteomes" id="UP000001192">
    <property type="component" value="Chromosome 1"/>
</dbReference>
<dbReference type="GO" id="GO:0005886">
    <property type="term" value="C:plasma membrane"/>
    <property type="evidence" value="ECO:0007669"/>
    <property type="project" value="UniProtKB-SubCell"/>
</dbReference>
<dbReference type="GO" id="GO:0046872">
    <property type="term" value="F:metal ion binding"/>
    <property type="evidence" value="ECO:0007669"/>
    <property type="project" value="UniProtKB-KW"/>
</dbReference>
<dbReference type="GO" id="GO:0008963">
    <property type="term" value="F:phospho-N-acetylmuramoyl-pentapeptide-transferase activity"/>
    <property type="evidence" value="ECO:0007669"/>
    <property type="project" value="UniProtKB-UniRule"/>
</dbReference>
<dbReference type="GO" id="GO:0051992">
    <property type="term" value="F:UDP-N-acetylmuramoyl-L-alanyl-D-glutamyl-meso-2,6-diaminopimelyl-D-alanyl-D-alanine:undecaprenyl-phosphate transferase activity"/>
    <property type="evidence" value="ECO:0007669"/>
    <property type="project" value="RHEA"/>
</dbReference>
<dbReference type="GO" id="GO:0051301">
    <property type="term" value="P:cell division"/>
    <property type="evidence" value="ECO:0007669"/>
    <property type="project" value="UniProtKB-KW"/>
</dbReference>
<dbReference type="GO" id="GO:0071555">
    <property type="term" value="P:cell wall organization"/>
    <property type="evidence" value="ECO:0007669"/>
    <property type="project" value="UniProtKB-KW"/>
</dbReference>
<dbReference type="GO" id="GO:0009252">
    <property type="term" value="P:peptidoglycan biosynthetic process"/>
    <property type="evidence" value="ECO:0007669"/>
    <property type="project" value="UniProtKB-UniRule"/>
</dbReference>
<dbReference type="GO" id="GO:0008360">
    <property type="term" value="P:regulation of cell shape"/>
    <property type="evidence" value="ECO:0007669"/>
    <property type="project" value="UniProtKB-KW"/>
</dbReference>
<dbReference type="CDD" id="cd06852">
    <property type="entry name" value="GT_MraY"/>
    <property type="match status" value="1"/>
</dbReference>
<dbReference type="HAMAP" id="MF_00038">
    <property type="entry name" value="MraY"/>
    <property type="match status" value="1"/>
</dbReference>
<dbReference type="InterPro" id="IPR000715">
    <property type="entry name" value="Glycosyl_transferase_4"/>
</dbReference>
<dbReference type="InterPro" id="IPR003524">
    <property type="entry name" value="PNAcMuramoyl-5peptid_Trfase"/>
</dbReference>
<dbReference type="InterPro" id="IPR018480">
    <property type="entry name" value="PNAcMuramoyl-5peptid_Trfase_CS"/>
</dbReference>
<dbReference type="NCBIfam" id="TIGR00445">
    <property type="entry name" value="mraY"/>
    <property type="match status" value="1"/>
</dbReference>
<dbReference type="PANTHER" id="PTHR22926">
    <property type="entry name" value="PHOSPHO-N-ACETYLMURAMOYL-PENTAPEPTIDE-TRANSFERASE"/>
    <property type="match status" value="1"/>
</dbReference>
<dbReference type="PANTHER" id="PTHR22926:SF5">
    <property type="entry name" value="PHOSPHO-N-ACETYLMURAMOYL-PENTAPEPTIDE-TRANSFERASE HOMOLOG"/>
    <property type="match status" value="1"/>
</dbReference>
<dbReference type="Pfam" id="PF00953">
    <property type="entry name" value="Glycos_transf_4"/>
    <property type="match status" value="1"/>
</dbReference>
<dbReference type="Pfam" id="PF10555">
    <property type="entry name" value="MraY_sig1"/>
    <property type="match status" value="1"/>
</dbReference>
<dbReference type="PROSITE" id="PS01347">
    <property type="entry name" value="MRAY_1"/>
    <property type="match status" value="1"/>
</dbReference>
<dbReference type="PROSITE" id="PS01348">
    <property type="entry name" value="MRAY_2"/>
    <property type="match status" value="1"/>
</dbReference>